<keyword id="KW-0030">Aminoacyl-tRNA synthetase</keyword>
<keyword id="KW-0067">ATP-binding</keyword>
<keyword id="KW-0963">Cytoplasm</keyword>
<keyword id="KW-0436">Ligase</keyword>
<keyword id="KW-0547">Nucleotide-binding</keyword>
<keyword id="KW-0648">Protein biosynthesis</keyword>
<keyword id="KW-1185">Reference proteome</keyword>
<evidence type="ECO:0000255" key="1">
    <source>
        <dbReference type="HAMAP-Rule" id="MF_00127"/>
    </source>
</evidence>
<protein>
    <recommendedName>
        <fullName evidence="1">Histidine--tRNA ligase</fullName>
        <ecNumber evidence="1">6.1.1.21</ecNumber>
    </recommendedName>
    <alternativeName>
        <fullName evidence="1">Histidyl-tRNA synthetase</fullName>
        <shortName evidence="1">HisRS</shortName>
    </alternativeName>
</protein>
<organism>
    <name type="scientific">Rippkaea orientalis (strain PCC 8801 / RF-1)</name>
    <name type="common">Cyanothece sp. (strain PCC 8801)</name>
    <dbReference type="NCBI Taxonomy" id="41431"/>
    <lineage>
        <taxon>Bacteria</taxon>
        <taxon>Bacillati</taxon>
        <taxon>Cyanobacteriota</taxon>
        <taxon>Cyanophyceae</taxon>
        <taxon>Oscillatoriophycideae</taxon>
        <taxon>Chroococcales</taxon>
        <taxon>Aphanothecaceae</taxon>
        <taxon>Rippkaea</taxon>
        <taxon>Rippkaea orientalis</taxon>
    </lineage>
</organism>
<feature type="chain" id="PRO_1000199124" description="Histidine--tRNA ligase">
    <location>
        <begin position="1"/>
        <end position="429"/>
    </location>
</feature>
<sequence>MGTIQTLPGTRDILPEEIGYWQYVETITTEILSRAMYQEIRAPIFEQTSLFERGIGEATDVVGKEMYTFKDRGDRSVTLRPEGTAGVVRAYLQNNLYATGGVQRLWYQGPMFRYERPQAGRQRQFHQIGLELLGSGDPRADVEVIALATDILKKLGLQSLKLDLNSVGDRNDRQRYREALVNYFLPYKNELDPDSQDRLERNPLRILDSKNQRTKEINQNAPSILQYLGDQSKKHFDQVQQLLTDLNISYQLNPCLVRGLDYYTHTAFEIQSDDLGAQATVCGGGRYDGLVAELGGPDTPAVGWAIGMERLIILLKQRQTVPHCVPDIYIVSKGEQAEAQALILAQKLRFEGLTVELDLSGSAFGKQFKRADRSGAIACIVLGDEEAGTQTLQLKWLATKQQETLDQTQLVSEIGELKAQLARHKQATG</sequence>
<name>SYH_RIPO1</name>
<proteinExistence type="inferred from homology"/>
<dbReference type="EC" id="6.1.1.21" evidence="1"/>
<dbReference type="EMBL" id="CP001287">
    <property type="protein sequence ID" value="ACK65252.1"/>
    <property type="molecule type" value="Genomic_DNA"/>
</dbReference>
<dbReference type="RefSeq" id="WP_012594526.1">
    <property type="nucleotide sequence ID" value="NC_011726.1"/>
</dbReference>
<dbReference type="SMR" id="B7K2B6"/>
<dbReference type="STRING" id="41431.PCC8801_1184"/>
<dbReference type="KEGG" id="cyp:PCC8801_1184"/>
<dbReference type="eggNOG" id="COG0124">
    <property type="taxonomic scope" value="Bacteria"/>
</dbReference>
<dbReference type="HOGENOM" id="CLU_025113_1_1_3"/>
<dbReference type="OrthoDB" id="9800814at2"/>
<dbReference type="Proteomes" id="UP000008204">
    <property type="component" value="Chromosome"/>
</dbReference>
<dbReference type="GO" id="GO:0005737">
    <property type="term" value="C:cytoplasm"/>
    <property type="evidence" value="ECO:0007669"/>
    <property type="project" value="UniProtKB-SubCell"/>
</dbReference>
<dbReference type="GO" id="GO:0005524">
    <property type="term" value="F:ATP binding"/>
    <property type="evidence" value="ECO:0007669"/>
    <property type="project" value="UniProtKB-UniRule"/>
</dbReference>
<dbReference type="GO" id="GO:0004821">
    <property type="term" value="F:histidine-tRNA ligase activity"/>
    <property type="evidence" value="ECO:0007669"/>
    <property type="project" value="UniProtKB-UniRule"/>
</dbReference>
<dbReference type="GO" id="GO:0006427">
    <property type="term" value="P:histidyl-tRNA aminoacylation"/>
    <property type="evidence" value="ECO:0007669"/>
    <property type="project" value="UniProtKB-UniRule"/>
</dbReference>
<dbReference type="CDD" id="cd00773">
    <property type="entry name" value="HisRS-like_core"/>
    <property type="match status" value="1"/>
</dbReference>
<dbReference type="CDD" id="cd00859">
    <property type="entry name" value="HisRS_anticodon"/>
    <property type="match status" value="1"/>
</dbReference>
<dbReference type="FunFam" id="3.30.930.10:FF:000005">
    <property type="entry name" value="Histidine--tRNA ligase"/>
    <property type="match status" value="1"/>
</dbReference>
<dbReference type="Gene3D" id="3.40.50.800">
    <property type="entry name" value="Anticodon-binding domain"/>
    <property type="match status" value="1"/>
</dbReference>
<dbReference type="Gene3D" id="3.30.930.10">
    <property type="entry name" value="Bira Bifunctional Protein, Domain 2"/>
    <property type="match status" value="1"/>
</dbReference>
<dbReference type="HAMAP" id="MF_00127">
    <property type="entry name" value="His_tRNA_synth"/>
    <property type="match status" value="1"/>
</dbReference>
<dbReference type="InterPro" id="IPR006195">
    <property type="entry name" value="aa-tRNA-synth_II"/>
</dbReference>
<dbReference type="InterPro" id="IPR045864">
    <property type="entry name" value="aa-tRNA-synth_II/BPL/LPL"/>
</dbReference>
<dbReference type="InterPro" id="IPR004154">
    <property type="entry name" value="Anticodon-bd"/>
</dbReference>
<dbReference type="InterPro" id="IPR036621">
    <property type="entry name" value="Anticodon-bd_dom_sf"/>
</dbReference>
<dbReference type="InterPro" id="IPR015807">
    <property type="entry name" value="His-tRNA-ligase"/>
</dbReference>
<dbReference type="InterPro" id="IPR041715">
    <property type="entry name" value="HisRS-like_core"/>
</dbReference>
<dbReference type="InterPro" id="IPR004516">
    <property type="entry name" value="HisRS/HisZ"/>
</dbReference>
<dbReference type="InterPro" id="IPR033656">
    <property type="entry name" value="HisRS_anticodon"/>
</dbReference>
<dbReference type="NCBIfam" id="TIGR00442">
    <property type="entry name" value="hisS"/>
    <property type="match status" value="1"/>
</dbReference>
<dbReference type="PANTHER" id="PTHR43707:SF1">
    <property type="entry name" value="HISTIDINE--TRNA LIGASE, MITOCHONDRIAL-RELATED"/>
    <property type="match status" value="1"/>
</dbReference>
<dbReference type="PANTHER" id="PTHR43707">
    <property type="entry name" value="HISTIDYL-TRNA SYNTHETASE"/>
    <property type="match status" value="1"/>
</dbReference>
<dbReference type="Pfam" id="PF03129">
    <property type="entry name" value="HGTP_anticodon"/>
    <property type="match status" value="1"/>
</dbReference>
<dbReference type="Pfam" id="PF13393">
    <property type="entry name" value="tRNA-synt_His"/>
    <property type="match status" value="1"/>
</dbReference>
<dbReference type="PIRSF" id="PIRSF001549">
    <property type="entry name" value="His-tRNA_synth"/>
    <property type="match status" value="1"/>
</dbReference>
<dbReference type="SUPFAM" id="SSF52954">
    <property type="entry name" value="Class II aaRS ABD-related"/>
    <property type="match status" value="1"/>
</dbReference>
<dbReference type="SUPFAM" id="SSF55681">
    <property type="entry name" value="Class II aaRS and biotin synthetases"/>
    <property type="match status" value="1"/>
</dbReference>
<dbReference type="PROSITE" id="PS50862">
    <property type="entry name" value="AA_TRNA_LIGASE_II"/>
    <property type="match status" value="1"/>
</dbReference>
<reference key="1">
    <citation type="journal article" date="2011" name="MBio">
        <title>Novel metabolic attributes of the genus Cyanothece, comprising a group of unicellular nitrogen-fixing Cyanobacteria.</title>
        <authorList>
            <person name="Bandyopadhyay A."/>
            <person name="Elvitigala T."/>
            <person name="Welsh E."/>
            <person name="Stockel J."/>
            <person name="Liberton M."/>
            <person name="Min H."/>
            <person name="Sherman L.A."/>
            <person name="Pakrasi H.B."/>
        </authorList>
    </citation>
    <scope>NUCLEOTIDE SEQUENCE [LARGE SCALE GENOMIC DNA]</scope>
    <source>
        <strain>PCC 8801 / RF-1</strain>
    </source>
</reference>
<comment type="catalytic activity">
    <reaction evidence="1">
        <text>tRNA(His) + L-histidine + ATP = L-histidyl-tRNA(His) + AMP + diphosphate + H(+)</text>
        <dbReference type="Rhea" id="RHEA:17313"/>
        <dbReference type="Rhea" id="RHEA-COMP:9665"/>
        <dbReference type="Rhea" id="RHEA-COMP:9689"/>
        <dbReference type="ChEBI" id="CHEBI:15378"/>
        <dbReference type="ChEBI" id="CHEBI:30616"/>
        <dbReference type="ChEBI" id="CHEBI:33019"/>
        <dbReference type="ChEBI" id="CHEBI:57595"/>
        <dbReference type="ChEBI" id="CHEBI:78442"/>
        <dbReference type="ChEBI" id="CHEBI:78527"/>
        <dbReference type="ChEBI" id="CHEBI:456215"/>
        <dbReference type="EC" id="6.1.1.21"/>
    </reaction>
</comment>
<comment type="subunit">
    <text evidence="1">Homodimer.</text>
</comment>
<comment type="subcellular location">
    <subcellularLocation>
        <location evidence="1">Cytoplasm</location>
    </subcellularLocation>
</comment>
<comment type="similarity">
    <text evidence="1">Belongs to the class-II aminoacyl-tRNA synthetase family.</text>
</comment>
<gene>
    <name evidence="1" type="primary">hisS</name>
    <name type="ordered locus">PCC8801_1184</name>
</gene>
<accession>B7K2B6</accession>